<sequence length="495" mass="55115">MMITGSSLYAAIDLGSNSFHMLVVREVAGSIQTLTRIKRKVRLAAGLSQDNHLSPEAMERGWQCLRLFAERLQDIPHNQIRVVATATLRLAVNSVDFIAKAQEILGCPVQVISGEEEARLIYQGVAHTTGGDDRRLVVDIGGASTELVTGTGAQATSLFSLSMGCVTWLERYFTDRNLAQENFDEAENAAREVLRPVMDKLRYHGWKVCVGASGTVQALQEIMMAQGMDERITLAKLQQLKQRAIQCGRLEELEIEGLTLERALVFPSGLAILIAIFSELDIHCMTLAGGALREGLVYGMLHLAVEQDIRSRTLRNVQRRFIVDTEQAQRVAQLASSFANQLKTTWALEPLSQDLLISACALHEMGLSIDFKQAPIHAAYLVRNLDLPGFTPAQKKLLATLLLNQTNTVDLSSLHQQNAVPPRVAEHLCRLLRLAILFASRRRDDLLPAIKLEAEGENLTLTLPEDWLDNHPLGAEMIEQEYQWQSYVHWALEVK</sequence>
<proteinExistence type="inferred from homology"/>
<keyword id="KW-0378">Hydrolase</keyword>
<gene>
    <name evidence="1" type="primary">gppA</name>
    <name type="ordered locus">Ent638_4006</name>
</gene>
<accession>A4WG31</accession>
<name>GPPA_ENT38</name>
<evidence type="ECO:0000255" key="1">
    <source>
        <dbReference type="HAMAP-Rule" id="MF_01550"/>
    </source>
</evidence>
<dbReference type="EC" id="3.6.1.40" evidence="1"/>
<dbReference type="EMBL" id="CP000653">
    <property type="protein sequence ID" value="ABP62661.1"/>
    <property type="molecule type" value="Genomic_DNA"/>
</dbReference>
<dbReference type="SMR" id="A4WG31"/>
<dbReference type="STRING" id="399742.Ent638_4006"/>
<dbReference type="KEGG" id="ent:Ent638_4006"/>
<dbReference type="eggNOG" id="COG0248">
    <property type="taxonomic scope" value="Bacteria"/>
</dbReference>
<dbReference type="HOGENOM" id="CLU_025908_4_0_6"/>
<dbReference type="UniPathway" id="UPA00908">
    <property type="reaction ID" value="UER00885"/>
</dbReference>
<dbReference type="Proteomes" id="UP000000230">
    <property type="component" value="Chromosome"/>
</dbReference>
<dbReference type="GO" id="GO:0008894">
    <property type="term" value="F:guanosine-5'-triphosphate,3'-diphosphate diphosphatase activity"/>
    <property type="evidence" value="ECO:0007669"/>
    <property type="project" value="UniProtKB-UniRule"/>
</dbReference>
<dbReference type="GO" id="GO:0015974">
    <property type="term" value="P:guanosine pentaphosphate catabolic process"/>
    <property type="evidence" value="ECO:0007669"/>
    <property type="project" value="InterPro"/>
</dbReference>
<dbReference type="GO" id="GO:0015970">
    <property type="term" value="P:guanosine tetraphosphate biosynthetic process"/>
    <property type="evidence" value="ECO:0007669"/>
    <property type="project" value="UniProtKB-UniRule"/>
</dbReference>
<dbReference type="GO" id="GO:0015949">
    <property type="term" value="P:nucleobase-containing small molecule interconversion"/>
    <property type="evidence" value="ECO:0007669"/>
    <property type="project" value="TreeGrafter"/>
</dbReference>
<dbReference type="CDD" id="cd24117">
    <property type="entry name" value="ASKHA_NBD_EcGppA-like"/>
    <property type="match status" value="1"/>
</dbReference>
<dbReference type="FunFam" id="1.10.3210.10:FF:000004">
    <property type="entry name" value="Guanosine-5'-triphosphate,3'-diphosphate pyrophosphatase"/>
    <property type="match status" value="1"/>
</dbReference>
<dbReference type="FunFam" id="3.30.420.150:FF:000001">
    <property type="entry name" value="Guanosine-5'-triphosphate,3'-diphosphate pyrophosphatase"/>
    <property type="match status" value="1"/>
</dbReference>
<dbReference type="FunFam" id="3.30.420.40:FF:000023">
    <property type="entry name" value="Guanosine-5'-triphosphate,3'-diphosphate pyrophosphatase"/>
    <property type="match status" value="1"/>
</dbReference>
<dbReference type="Gene3D" id="3.30.420.40">
    <property type="match status" value="1"/>
</dbReference>
<dbReference type="Gene3D" id="3.30.420.150">
    <property type="entry name" value="Exopolyphosphatase. Domain 2"/>
    <property type="match status" value="1"/>
</dbReference>
<dbReference type="Gene3D" id="1.10.3210.10">
    <property type="entry name" value="Hypothetical protein af1432"/>
    <property type="match status" value="1"/>
</dbReference>
<dbReference type="HAMAP" id="MF_01550">
    <property type="entry name" value="GppA"/>
    <property type="match status" value="1"/>
</dbReference>
<dbReference type="InterPro" id="IPR043129">
    <property type="entry name" value="ATPase_NBD"/>
</dbReference>
<dbReference type="InterPro" id="IPR050273">
    <property type="entry name" value="GppA/Ppx_hydrolase"/>
</dbReference>
<dbReference type="InterPro" id="IPR023709">
    <property type="entry name" value="Guo-5TP_3DP_PyrP"/>
</dbReference>
<dbReference type="InterPro" id="IPR048950">
    <property type="entry name" value="Ppx_GppA_C"/>
</dbReference>
<dbReference type="InterPro" id="IPR003695">
    <property type="entry name" value="Ppx_GppA_N"/>
</dbReference>
<dbReference type="InterPro" id="IPR030673">
    <property type="entry name" value="PyroPPase_GppA_Ppx"/>
</dbReference>
<dbReference type="NCBIfam" id="NF008260">
    <property type="entry name" value="PRK11031.1"/>
    <property type="match status" value="1"/>
</dbReference>
<dbReference type="PANTHER" id="PTHR30005">
    <property type="entry name" value="EXOPOLYPHOSPHATASE"/>
    <property type="match status" value="1"/>
</dbReference>
<dbReference type="PANTHER" id="PTHR30005:SF0">
    <property type="entry name" value="RETROGRADE REGULATION PROTEIN 2"/>
    <property type="match status" value="1"/>
</dbReference>
<dbReference type="Pfam" id="PF02541">
    <property type="entry name" value="Ppx-GppA"/>
    <property type="match status" value="1"/>
</dbReference>
<dbReference type="Pfam" id="PF21447">
    <property type="entry name" value="Ppx-GppA_III"/>
    <property type="match status" value="1"/>
</dbReference>
<dbReference type="PIRSF" id="PIRSF001267">
    <property type="entry name" value="Pyrophosphatase_GppA_Ppx"/>
    <property type="match status" value="1"/>
</dbReference>
<dbReference type="SUPFAM" id="SSF53067">
    <property type="entry name" value="Actin-like ATPase domain"/>
    <property type="match status" value="2"/>
</dbReference>
<dbReference type="SUPFAM" id="SSF109604">
    <property type="entry name" value="HD-domain/PDEase-like"/>
    <property type="match status" value="1"/>
</dbReference>
<comment type="function">
    <text evidence="1">Catalyzes the conversion of pppGpp to ppGpp. Guanosine pentaphosphate (pppGpp) is a cytoplasmic signaling molecule which together with ppGpp controls the 'stringent response', an adaptive process that allows bacteria to respond to amino acid starvation, resulting in the coordinated regulation of numerous cellular activities.</text>
</comment>
<comment type="catalytic activity">
    <reaction evidence="1">
        <text>guanosine 3'-diphosphate 5'-triphosphate + H2O = guanosine 3',5'-bis(diphosphate) + phosphate + H(+)</text>
        <dbReference type="Rhea" id="RHEA:13073"/>
        <dbReference type="ChEBI" id="CHEBI:15377"/>
        <dbReference type="ChEBI" id="CHEBI:15378"/>
        <dbReference type="ChEBI" id="CHEBI:43474"/>
        <dbReference type="ChEBI" id="CHEBI:77828"/>
        <dbReference type="ChEBI" id="CHEBI:142410"/>
        <dbReference type="EC" id="3.6.1.40"/>
    </reaction>
</comment>
<comment type="pathway">
    <text evidence="1">Purine metabolism; ppGpp biosynthesis; ppGpp from GTP: step 2/2.</text>
</comment>
<comment type="similarity">
    <text evidence="1">Belongs to the GppA/Ppx family. GppA subfamily.</text>
</comment>
<feature type="chain" id="PRO_0000318615" description="Guanosine-5'-triphosphate,3'-diphosphate pyrophosphatase">
    <location>
        <begin position="1"/>
        <end position="495"/>
    </location>
</feature>
<organism>
    <name type="scientific">Enterobacter sp. (strain 638)</name>
    <dbReference type="NCBI Taxonomy" id="399742"/>
    <lineage>
        <taxon>Bacteria</taxon>
        <taxon>Pseudomonadati</taxon>
        <taxon>Pseudomonadota</taxon>
        <taxon>Gammaproteobacteria</taxon>
        <taxon>Enterobacterales</taxon>
        <taxon>Enterobacteriaceae</taxon>
        <taxon>Enterobacter</taxon>
    </lineage>
</organism>
<protein>
    <recommendedName>
        <fullName evidence="1">Guanosine-5'-triphosphate,3'-diphosphate pyrophosphatase</fullName>
        <ecNumber evidence="1">3.6.1.40</ecNumber>
    </recommendedName>
    <alternativeName>
        <fullName evidence="1">Guanosine pentaphosphate phosphohydrolase</fullName>
    </alternativeName>
    <alternativeName>
        <fullName evidence="1">pppGpp-5'-phosphohydrolase</fullName>
    </alternativeName>
</protein>
<reference key="1">
    <citation type="journal article" date="2010" name="PLoS Genet.">
        <title>Genome sequence of the plant growth promoting endophytic bacterium Enterobacter sp. 638.</title>
        <authorList>
            <person name="Taghavi S."/>
            <person name="van der Lelie D."/>
            <person name="Hoffman A."/>
            <person name="Zhang Y.B."/>
            <person name="Walla M.D."/>
            <person name="Vangronsveld J."/>
            <person name="Newman L."/>
            <person name="Monchy S."/>
        </authorList>
    </citation>
    <scope>NUCLEOTIDE SEQUENCE [LARGE SCALE GENOMIC DNA]</scope>
    <source>
        <strain>638</strain>
    </source>
</reference>